<keyword id="KW-0328">Glycosyltransferase</keyword>
<keyword id="KW-0333">Golgi apparatus</keyword>
<keyword id="KW-0443">Lipid metabolism</keyword>
<keyword id="KW-0472">Membrane</keyword>
<keyword id="KW-1185">Reference proteome</keyword>
<keyword id="KW-0746">Sphingolipid metabolism</keyword>
<keyword id="KW-0808">Transferase</keyword>
<keyword id="KW-0812">Transmembrane</keyword>
<keyword id="KW-1133">Transmembrane helix</keyword>
<organism>
    <name type="scientific">Candida albicans (strain SC5314 / ATCC MYA-2876)</name>
    <name type="common">Yeast</name>
    <dbReference type="NCBI Taxonomy" id="237561"/>
    <lineage>
        <taxon>Eukaryota</taxon>
        <taxon>Fungi</taxon>
        <taxon>Dikarya</taxon>
        <taxon>Ascomycota</taxon>
        <taxon>Saccharomycotina</taxon>
        <taxon>Pichiomycetes</taxon>
        <taxon>Debaryomycetaceae</taxon>
        <taxon>Candida/Lodderomyces clade</taxon>
        <taxon>Candida</taxon>
    </lineage>
</organism>
<reference key="1">
    <citation type="journal article" date="2004" name="Proc. Natl. Acad. Sci. U.S.A.">
        <title>The diploid genome sequence of Candida albicans.</title>
        <authorList>
            <person name="Jones T."/>
            <person name="Federspiel N.A."/>
            <person name="Chibana H."/>
            <person name="Dungan J."/>
            <person name="Kalman S."/>
            <person name="Magee B.B."/>
            <person name="Newport G."/>
            <person name="Thorstenson Y.R."/>
            <person name="Agabian N."/>
            <person name="Magee P.T."/>
            <person name="Davis R.W."/>
            <person name="Scherer S."/>
        </authorList>
    </citation>
    <scope>NUCLEOTIDE SEQUENCE [LARGE SCALE GENOMIC DNA]</scope>
    <source>
        <strain>SC5314 / ATCC MYA-2876</strain>
    </source>
</reference>
<reference key="2">
    <citation type="journal article" date="2007" name="Genome Biol.">
        <title>Assembly of the Candida albicans genome into sixteen supercontigs aligned on the eight chromosomes.</title>
        <authorList>
            <person name="van het Hoog M."/>
            <person name="Rast T.J."/>
            <person name="Martchenko M."/>
            <person name="Grindle S."/>
            <person name="Dignard D."/>
            <person name="Hogues H."/>
            <person name="Cuomo C."/>
            <person name="Berriman M."/>
            <person name="Scherer S."/>
            <person name="Magee B.B."/>
            <person name="Whiteway M."/>
            <person name="Chibana H."/>
            <person name="Nantel A."/>
            <person name="Magee P.T."/>
        </authorList>
    </citation>
    <scope>GENOME REANNOTATION</scope>
    <source>
        <strain>SC5314 / ATCC MYA-2876</strain>
    </source>
</reference>
<reference key="3">
    <citation type="journal article" date="2013" name="Genome Biol.">
        <title>Assembly of a phased diploid Candida albicans genome facilitates allele-specific measurements and provides a simple model for repeat and indel structure.</title>
        <authorList>
            <person name="Muzzey D."/>
            <person name="Schwartz K."/>
            <person name="Weissman J.S."/>
            <person name="Sherlock G."/>
        </authorList>
    </citation>
    <scope>NUCLEOTIDE SEQUENCE [LARGE SCALE GENOMIC DNA]</scope>
    <scope>GENOME REANNOTATION</scope>
    <source>
        <strain>SC5314 / ATCC MYA-2876</strain>
    </source>
</reference>
<reference key="4">
    <citation type="journal article" date="2001" name="J. Biol. Chem.">
        <title>Glucosylceramide synthases, a gene family responsible for the biosynthesis of glucosphingolipids in animals, plants, and fungi.</title>
        <authorList>
            <person name="Leipelt M."/>
            <person name="Warnecke D."/>
            <person name="Zahringer U."/>
            <person name="Ott C."/>
            <person name="Muller F."/>
            <person name="Hube B."/>
            <person name="Heinz E."/>
        </authorList>
    </citation>
    <scope>FUNCTION</scope>
    <scope>CATALYTIC ACTIVITY</scope>
    <scope>PATHWAY</scope>
    <scope>DISRUPTION PHENOTYPE</scope>
</reference>
<reference key="5">
    <citation type="journal article" date="2004" name="J. Biol. Chem.">
        <title>Defensins from insects and plants interact with fungal glucosylceramides.</title>
        <authorList>
            <person name="Thevissen K."/>
            <person name="Warnecke D.C."/>
            <person name="Francois I.E."/>
            <person name="Leipelt M."/>
            <person name="Heinz E."/>
            <person name="Ott C."/>
            <person name="Zaehringer U."/>
            <person name="Thomma B.P."/>
            <person name="Ferket K.K."/>
            <person name="Cammue B.P."/>
        </authorList>
    </citation>
    <scope>DISRUPTION PHENOTYPE</scope>
</reference>
<reference key="6">
    <citation type="journal article" date="2010" name="Microbiology">
        <title>Candida albicans sphingolipid C9-methyltransferase is involved in hyphal elongation.</title>
        <authorList>
            <person name="Oura T."/>
            <person name="Kajiwara S."/>
        </authorList>
    </citation>
    <scope>DISRUPTION PHENOTYPE</scope>
</reference>
<name>CEGT_CANAL</name>
<protein>
    <recommendedName>
        <fullName evidence="1">Ceramide glucosyltransferase</fullName>
        <ecNumber evidence="4">2.4.1.80</ecNumber>
    </recommendedName>
    <alternativeName>
        <fullName>GLCT-1</fullName>
    </alternativeName>
    <alternativeName>
        <fullName evidence="7">Glucosylceramide synthase</fullName>
        <shortName>GCS</shortName>
    </alternativeName>
    <alternativeName>
        <fullName evidence="8">UDP-glucose ceramide glucosyltransferase</fullName>
    </alternativeName>
    <alternativeName>
        <fullName>UDP-glucose:N-acylsphingosine D-glucosyltransferase</fullName>
    </alternativeName>
</protein>
<feature type="chain" id="PRO_0000434806" description="Ceramide glucosyltransferase">
    <location>
        <begin position="1"/>
        <end position="544"/>
    </location>
</feature>
<feature type="topological domain" description="Lumenal" evidence="9">
    <location>
        <begin position="1"/>
        <end position="15"/>
    </location>
</feature>
<feature type="transmembrane region" description="Helical" evidence="3">
    <location>
        <begin position="16"/>
        <end position="36"/>
    </location>
</feature>
<feature type="topological domain" description="Cytoplasmic" evidence="2">
    <location>
        <begin position="37"/>
        <end position="427"/>
    </location>
</feature>
<feature type="transmembrane region" description="Helical" evidence="3">
    <location>
        <begin position="428"/>
        <end position="448"/>
    </location>
</feature>
<feature type="topological domain" description="Lumenal" evidence="9">
    <location>
        <begin position="449"/>
        <end position="451"/>
    </location>
</feature>
<feature type="transmembrane region" description="Helical" evidence="3">
    <location>
        <begin position="452"/>
        <end position="472"/>
    </location>
</feature>
<feature type="topological domain" description="Cytoplasmic" evidence="9">
    <location>
        <begin position="473"/>
        <end position="501"/>
    </location>
</feature>
<feature type="transmembrane region" description="Helical" evidence="3">
    <location>
        <begin position="502"/>
        <end position="522"/>
    </location>
</feature>
<feature type="topological domain" description="Lumenal" evidence="9">
    <location>
        <begin position="523"/>
        <end position="544"/>
    </location>
</feature>
<feature type="short sequence motif" description="D1" evidence="9">
    <location>
        <position position="109"/>
    </location>
</feature>
<feature type="short sequence motif" description="D2" evidence="9">
    <location>
        <position position="171"/>
    </location>
</feature>
<feature type="short sequence motif" description="D3" evidence="9">
    <location>
        <position position="364"/>
    </location>
</feature>
<feature type="short sequence motif" description="(Q/R)XXRW" evidence="9">
    <location>
        <begin position="404"/>
        <end position="408"/>
    </location>
</feature>
<feature type="active site" description="Proton acceptor" evidence="2">
    <location>
        <position position="364"/>
    </location>
</feature>
<dbReference type="EC" id="2.4.1.80" evidence="4"/>
<dbReference type="EMBL" id="CP017626">
    <property type="protein sequence ID" value="AOW28972.1"/>
    <property type="molecule type" value="Genomic_DNA"/>
</dbReference>
<dbReference type="RefSeq" id="XP_722664.1">
    <property type="nucleotide sequence ID" value="XM_717571.1"/>
</dbReference>
<dbReference type="STRING" id="237561.Q5AMQ4"/>
<dbReference type="EnsemblFungi" id="C4_02010C_A-T">
    <property type="protein sequence ID" value="C4_02010C_A-T-p1"/>
    <property type="gene ID" value="C4_02010C_A"/>
</dbReference>
<dbReference type="GeneID" id="3635660"/>
<dbReference type="KEGG" id="cal:CAALFM_C402010CA"/>
<dbReference type="CGD" id="CAL0000175173">
    <property type="gene designation" value="HSX11"/>
</dbReference>
<dbReference type="VEuPathDB" id="FungiDB:C4_02010C_A"/>
<dbReference type="eggNOG" id="KOG2547">
    <property type="taxonomic scope" value="Eukaryota"/>
</dbReference>
<dbReference type="HOGENOM" id="CLU_030898_1_0_1"/>
<dbReference type="InParanoid" id="Q5AMQ4"/>
<dbReference type="OMA" id="IVWIIDC"/>
<dbReference type="OrthoDB" id="1483400at2759"/>
<dbReference type="UniPathway" id="UPA00222"/>
<dbReference type="PRO" id="PR:Q5AMQ4"/>
<dbReference type="Proteomes" id="UP000000559">
    <property type="component" value="Chromosome 4"/>
</dbReference>
<dbReference type="GO" id="GO:0000139">
    <property type="term" value="C:Golgi membrane"/>
    <property type="evidence" value="ECO:0007669"/>
    <property type="project" value="UniProtKB-SubCell"/>
</dbReference>
<dbReference type="GO" id="GO:0016020">
    <property type="term" value="C:membrane"/>
    <property type="evidence" value="ECO:0000318"/>
    <property type="project" value="GO_Central"/>
</dbReference>
<dbReference type="GO" id="GO:0008120">
    <property type="term" value="F:ceramide glucosyltransferase activity"/>
    <property type="evidence" value="ECO:0000314"/>
    <property type="project" value="CGD"/>
</dbReference>
<dbReference type="GO" id="GO:0030447">
    <property type="term" value="P:filamentous growth"/>
    <property type="evidence" value="ECO:0000315"/>
    <property type="project" value="CGD"/>
</dbReference>
<dbReference type="GO" id="GO:0006679">
    <property type="term" value="P:glucosylceramide biosynthetic process"/>
    <property type="evidence" value="ECO:0000315"/>
    <property type="project" value="CGD"/>
</dbReference>
<dbReference type="FunFam" id="3.90.550.10:FF:000389">
    <property type="entry name" value="UDP-glucose ceramide glucosyltransferase"/>
    <property type="match status" value="1"/>
</dbReference>
<dbReference type="Gene3D" id="3.90.550.10">
    <property type="entry name" value="Spore Coat Polysaccharide Biosynthesis Protein SpsA, Chain A"/>
    <property type="match status" value="1"/>
</dbReference>
<dbReference type="InterPro" id="IPR025993">
    <property type="entry name" value="Ceramide_glucosylTrfase"/>
</dbReference>
<dbReference type="InterPro" id="IPR029044">
    <property type="entry name" value="Nucleotide-diphossugar_trans"/>
</dbReference>
<dbReference type="PANTHER" id="PTHR12726">
    <property type="entry name" value="CERAMIDE GLUCOSYLTRANSFERASE"/>
    <property type="match status" value="1"/>
</dbReference>
<dbReference type="PANTHER" id="PTHR12726:SF0">
    <property type="entry name" value="CERAMIDE GLUCOSYLTRANSFERASE"/>
    <property type="match status" value="1"/>
</dbReference>
<dbReference type="Pfam" id="PF13506">
    <property type="entry name" value="Glyco_transf_21"/>
    <property type="match status" value="1"/>
</dbReference>
<dbReference type="SUPFAM" id="SSF53448">
    <property type="entry name" value="Nucleotide-diphospho-sugar transferases"/>
    <property type="match status" value="1"/>
</dbReference>
<proteinExistence type="evidence at protein level"/>
<accession>Q5AMQ4</accession>
<accession>A0A1D8PLE8</accession>
<comment type="function">
    <text evidence="4">Catalyzes the final step in the biosynthesis of the membrane lipid glucosylceramide (GluCer), the transfer of glucose to ceramide. Glucosylceramides play important roles in growth, differentiation and pathogenicity.</text>
</comment>
<comment type="catalytic activity">
    <reaction evidence="4">
        <text>an N-acylsphing-4-enine + UDP-alpha-D-glucose = a beta-D-glucosyl-(1&lt;-&gt;1')-N-acylsphing-4-enine + UDP + H(+)</text>
        <dbReference type="Rhea" id="RHEA:12088"/>
        <dbReference type="ChEBI" id="CHEBI:15378"/>
        <dbReference type="ChEBI" id="CHEBI:22801"/>
        <dbReference type="ChEBI" id="CHEBI:52639"/>
        <dbReference type="ChEBI" id="CHEBI:58223"/>
        <dbReference type="ChEBI" id="CHEBI:58885"/>
        <dbReference type="EC" id="2.4.1.80"/>
    </reaction>
</comment>
<comment type="pathway">
    <text evidence="10">Lipid metabolism; sphingolipid metabolism.</text>
</comment>
<comment type="subcellular location">
    <subcellularLocation>
        <location evidence="2">Golgi apparatus membrane</location>
        <topology evidence="3">Multi-pass membrane protein</topology>
    </subcellularLocation>
</comment>
<comment type="domain">
    <text evidence="2">The D1, D2, D3, (Q/R)XXRW motif is a critical part of the GCS active site, involved in catalysis and UDP-sugar binding.</text>
</comment>
<comment type="disruption phenotype">
    <text evidence="4 5 6">Results in complete loss of glucosylceramides (GluCers) in mutant cells (PubMed:11443131). Has a decreased hyphal growth rate and increased susceptibility to SDS and fluconazole, suggesting defects in the cell membrane structure (PubMed:20019081). Shows increased resistance to plant defensin RsAFP2, and to heliomicin, a defensin-like peptide from the insect Heliothis virescens (PubMed:14604982).</text>
</comment>
<comment type="similarity">
    <text evidence="9">Belongs to the glycosyltransferase 2 family.</text>
</comment>
<sequence>MVQEELSLFRITTGYFFLLWYIIILVAAYSGFFEILFNFRNRPILHTKQQANHQNDPESDDEEIYEGVTIIRPIKGIDPELTSCLESSFCQNYPRSKLQILFCVDDPNDPSIPIIQKLIAKYPTVDAQILTSESYNSQTKTSDDHYGPNPKVNNLAKGFVHAKYDILWVMDSNVWASSNILKNSVISLNGNLNMSRKMGQSRPVKLVHHVPLALSINNTTRSDDFIGGQDLEITAMTPVPSSESLNSQLVKRKSSPKSNNSLNVHPGFTYSKFSKKLGAELDEMFLHTSHSKFYVSLNNLAVAPCVNGKSNIYRRSDLDQSVRLIPHKDSPFFKDPKVKQDAGYYTSLGVGHAIKFFARYIGEDNMIGIALWENTQGRTGLTGDVVVQPYSGSENNAVKDYIQRRVRWLRVRKYMVLLATLIEPTTESIICGIYGTYAISTVFFGTWFNKYWFVMHMLIWMLTDYVQYHTLINHTLDVKNITYLPNWLNESIPPKQRNCLQWGYIWILRELLALPIWIIAMIGHEIDWRGRPFRIKKDLTAEEM</sequence>
<evidence type="ECO:0000250" key="1">
    <source>
        <dbReference type="UniProtKB" id="Q16739"/>
    </source>
</evidence>
<evidence type="ECO:0000250" key="2">
    <source>
        <dbReference type="UniProtKB" id="Q9R0E0"/>
    </source>
</evidence>
<evidence type="ECO:0000255" key="3"/>
<evidence type="ECO:0000269" key="4">
    <source>
    </source>
</evidence>
<evidence type="ECO:0000269" key="5">
    <source>
    </source>
</evidence>
<evidence type="ECO:0000269" key="6">
    <source>
    </source>
</evidence>
<evidence type="ECO:0000303" key="7">
    <source>
    </source>
</evidence>
<evidence type="ECO:0000303" key="8">
    <source>
    </source>
</evidence>
<evidence type="ECO:0000305" key="9"/>
<evidence type="ECO:0000305" key="10">
    <source>
    </source>
</evidence>
<gene>
    <name evidence="7" type="primary">HSX11</name>
    <name type="synonym">CGT1</name>
    <name type="ordered locus">CAALFM_C402010CA</name>
    <name type="ORF">CaO19.12061</name>
    <name type="ORF">CaO19.4592</name>
</gene>